<protein>
    <recommendedName>
        <fullName evidence="1">Membrane protein insertase YidC</fullName>
    </recommendedName>
    <alternativeName>
        <fullName evidence="1">Foldase YidC</fullName>
    </alternativeName>
    <alternativeName>
        <fullName evidence="1">Membrane integrase YidC</fullName>
    </alternativeName>
    <alternativeName>
        <fullName evidence="1">Membrane protein YidC</fullName>
    </alternativeName>
</protein>
<gene>
    <name evidence="1" type="primary">yidC</name>
    <name type="ordered locus">SAS1994</name>
</gene>
<keyword id="KW-1003">Cell membrane</keyword>
<keyword id="KW-0143">Chaperone</keyword>
<keyword id="KW-0449">Lipoprotein</keyword>
<keyword id="KW-0472">Membrane</keyword>
<keyword id="KW-0564">Palmitate</keyword>
<keyword id="KW-0653">Protein transport</keyword>
<keyword id="KW-0732">Signal</keyword>
<keyword id="KW-0812">Transmembrane</keyword>
<keyword id="KW-1133">Transmembrane helix</keyword>
<keyword id="KW-0813">Transport</keyword>
<feature type="signal peptide" evidence="1">
    <location>
        <begin position="1"/>
        <end position="19"/>
    </location>
</feature>
<feature type="chain" id="PRO_0000020395" description="Membrane protein insertase YidC">
    <location>
        <begin position="20"/>
        <end position="290"/>
    </location>
</feature>
<feature type="transmembrane region" description="Helical" evidence="1">
    <location>
        <begin position="56"/>
        <end position="76"/>
    </location>
</feature>
<feature type="transmembrane region" description="Helical" evidence="1">
    <location>
        <begin position="134"/>
        <end position="154"/>
    </location>
</feature>
<feature type="transmembrane region" description="Helical" evidence="1">
    <location>
        <begin position="176"/>
        <end position="196"/>
    </location>
</feature>
<feature type="transmembrane region" description="Helical" evidence="1">
    <location>
        <begin position="207"/>
        <end position="224"/>
    </location>
</feature>
<feature type="transmembrane region" description="Helical" evidence="1">
    <location>
        <begin position="229"/>
        <end position="251"/>
    </location>
</feature>
<feature type="region of interest" description="Disordered" evidence="2">
    <location>
        <begin position="270"/>
        <end position="290"/>
    </location>
</feature>
<feature type="lipid moiety-binding region" description="N-palmitoyl cysteine" evidence="1">
    <location>
        <position position="20"/>
    </location>
</feature>
<feature type="lipid moiety-binding region" description="S-diacylglycerol cysteine" evidence="1">
    <location>
        <position position="20"/>
    </location>
</feature>
<comment type="function">
    <text evidence="1">Required for the insertion and/or proper folding and/or complex formation of integral membrane proteins into the membrane. Involved in integration of membrane proteins that insert both dependently and independently of the Sec translocase complex, as well as at least some lipoproteins.</text>
</comment>
<comment type="subcellular location">
    <subcellularLocation>
        <location evidence="1">Cell membrane</location>
        <topology evidence="1">Multi-pass membrane protein</topology>
    </subcellularLocation>
</comment>
<comment type="similarity">
    <text evidence="1">Belongs to the OXA1/ALB3/YidC family. Type 2 subfamily.</text>
</comment>
<evidence type="ECO:0000255" key="1">
    <source>
        <dbReference type="HAMAP-Rule" id="MF_01811"/>
    </source>
</evidence>
<evidence type="ECO:0000256" key="2">
    <source>
        <dbReference type="SAM" id="MobiDB-lite"/>
    </source>
</evidence>
<name>YIDC_STAAS</name>
<proteinExistence type="inferred from homology"/>
<organism>
    <name type="scientific">Staphylococcus aureus (strain MSSA476)</name>
    <dbReference type="NCBI Taxonomy" id="282459"/>
    <lineage>
        <taxon>Bacteria</taxon>
        <taxon>Bacillati</taxon>
        <taxon>Bacillota</taxon>
        <taxon>Bacilli</taxon>
        <taxon>Bacillales</taxon>
        <taxon>Staphylococcaceae</taxon>
        <taxon>Staphylococcus</taxon>
    </lineage>
</organism>
<sequence>MKKKALLPLFLGIMVFLAGCDYSKPEKRSGFFYNTFVDPMKNVLDWLGNNLLNDNYGLAIIILVLVIRIILLPFMLSNYKNSHMMRQKMKVAKPEVEKIQEKVKRARTQEEKMAANQELMQVYKKYDMNPIKSMLGCLPMLIQLPIIMGLYFVLKDQLVDGLFKYPHFLWFDLGRPDIWITIIAGVLYFIQAYVSSKTMPDEQRQMGYMMMVISPIMIIWISLSSASALGLYWSVSAAFLVVQTHFANIYYEKVAKKEVQPFIEAYEREHNGGSNKKGKNTQVVSKKKKK</sequence>
<reference key="1">
    <citation type="journal article" date="2004" name="Proc. Natl. Acad. Sci. U.S.A.">
        <title>Complete genomes of two clinical Staphylococcus aureus strains: evidence for the rapid evolution of virulence and drug resistance.</title>
        <authorList>
            <person name="Holden M.T.G."/>
            <person name="Feil E.J."/>
            <person name="Lindsay J.A."/>
            <person name="Peacock S.J."/>
            <person name="Day N.P.J."/>
            <person name="Enright M.C."/>
            <person name="Foster T.J."/>
            <person name="Moore C.E."/>
            <person name="Hurst L."/>
            <person name="Atkin R."/>
            <person name="Barron A."/>
            <person name="Bason N."/>
            <person name="Bentley S.D."/>
            <person name="Chillingworth C."/>
            <person name="Chillingworth T."/>
            <person name="Churcher C."/>
            <person name="Clark L."/>
            <person name="Corton C."/>
            <person name="Cronin A."/>
            <person name="Doggett J."/>
            <person name="Dowd L."/>
            <person name="Feltwell T."/>
            <person name="Hance Z."/>
            <person name="Harris B."/>
            <person name="Hauser H."/>
            <person name="Holroyd S."/>
            <person name="Jagels K."/>
            <person name="James K.D."/>
            <person name="Lennard N."/>
            <person name="Line A."/>
            <person name="Mayes R."/>
            <person name="Moule S."/>
            <person name="Mungall K."/>
            <person name="Ormond D."/>
            <person name="Quail M.A."/>
            <person name="Rabbinowitsch E."/>
            <person name="Rutherford K.M."/>
            <person name="Sanders M."/>
            <person name="Sharp S."/>
            <person name="Simmonds M."/>
            <person name="Stevens K."/>
            <person name="Whitehead S."/>
            <person name="Barrell B.G."/>
            <person name="Spratt B.G."/>
            <person name="Parkhill J."/>
        </authorList>
    </citation>
    <scope>NUCLEOTIDE SEQUENCE [LARGE SCALE GENOMIC DNA]</scope>
    <source>
        <strain>MSSA476</strain>
    </source>
</reference>
<dbReference type="EMBL" id="BX571857">
    <property type="protein sequence ID" value="CAG43801.1"/>
    <property type="molecule type" value="Genomic_DNA"/>
</dbReference>
<dbReference type="RefSeq" id="WP_000725802.1">
    <property type="nucleotide sequence ID" value="NC_002953.3"/>
</dbReference>
<dbReference type="SMR" id="Q6G7M0"/>
<dbReference type="KEGG" id="sas:SAS1994"/>
<dbReference type="HOGENOM" id="CLU_036138_5_2_9"/>
<dbReference type="GO" id="GO:0005886">
    <property type="term" value="C:plasma membrane"/>
    <property type="evidence" value="ECO:0007669"/>
    <property type="project" value="UniProtKB-SubCell"/>
</dbReference>
<dbReference type="GO" id="GO:0032977">
    <property type="term" value="F:membrane insertase activity"/>
    <property type="evidence" value="ECO:0007669"/>
    <property type="project" value="InterPro"/>
</dbReference>
<dbReference type="GO" id="GO:0051205">
    <property type="term" value="P:protein insertion into membrane"/>
    <property type="evidence" value="ECO:0007669"/>
    <property type="project" value="TreeGrafter"/>
</dbReference>
<dbReference type="GO" id="GO:0015031">
    <property type="term" value="P:protein transport"/>
    <property type="evidence" value="ECO:0007669"/>
    <property type="project" value="UniProtKB-KW"/>
</dbReference>
<dbReference type="CDD" id="cd20070">
    <property type="entry name" value="5TM_YidC_Alb3"/>
    <property type="match status" value="1"/>
</dbReference>
<dbReference type="HAMAP" id="MF_01811">
    <property type="entry name" value="YidC_type2"/>
    <property type="match status" value="1"/>
</dbReference>
<dbReference type="InterPro" id="IPR001708">
    <property type="entry name" value="YidC/ALB3/OXA1/COX18"/>
</dbReference>
<dbReference type="InterPro" id="IPR028055">
    <property type="entry name" value="YidC/Oxa/ALB_C"/>
</dbReference>
<dbReference type="InterPro" id="IPR023060">
    <property type="entry name" value="YidC/YidC1/YidC2_Firmicutes"/>
</dbReference>
<dbReference type="InterPro" id="IPR047196">
    <property type="entry name" value="YidC_ALB_C"/>
</dbReference>
<dbReference type="NCBIfam" id="TIGR03592">
    <property type="entry name" value="yidC_oxa1_cterm"/>
    <property type="match status" value="1"/>
</dbReference>
<dbReference type="PANTHER" id="PTHR12428:SF65">
    <property type="entry name" value="CYTOCHROME C OXIDASE ASSEMBLY PROTEIN COX18, MITOCHONDRIAL"/>
    <property type="match status" value="1"/>
</dbReference>
<dbReference type="PANTHER" id="PTHR12428">
    <property type="entry name" value="OXA1"/>
    <property type="match status" value="1"/>
</dbReference>
<dbReference type="Pfam" id="PF02096">
    <property type="entry name" value="60KD_IMP"/>
    <property type="match status" value="1"/>
</dbReference>
<dbReference type="PRINTS" id="PR00701">
    <property type="entry name" value="60KDINNERMP"/>
</dbReference>
<dbReference type="PROSITE" id="PS51257">
    <property type="entry name" value="PROKAR_LIPOPROTEIN"/>
    <property type="match status" value="1"/>
</dbReference>
<accession>Q6G7M0</accession>